<organism>
    <name type="scientific">Yersinia pestis bv. Antiqua (strain Nepal516)</name>
    <dbReference type="NCBI Taxonomy" id="377628"/>
    <lineage>
        <taxon>Bacteria</taxon>
        <taxon>Pseudomonadati</taxon>
        <taxon>Pseudomonadota</taxon>
        <taxon>Gammaproteobacteria</taxon>
        <taxon>Enterobacterales</taxon>
        <taxon>Yersiniaceae</taxon>
        <taxon>Yersinia</taxon>
    </lineage>
</organism>
<sequence>MANPLYHKHIISINDLSRDELELVLRTAASLKKTPQPELLKHKVIASCFFEASTRTRLSFETSIHRLGASVVGFSDSSNTSLGKKGETLADTMSVISTYVDAIVMRHPQEGASRLAAQFSGNVPIVNAGDGANQHPTQTLLDLFTIQETQGRLDNINIAMVGDLKYGRTVHSLTQALAKFNGNHFFFIAPDALAMPAYILQMLEEKEIEYSLHESLEEVVPELDILYMTRVQKERLDPSEYANVKAQFILRSSDLTGARDNLKVLHPLPRIDEITTDVDKTPYAYYFQQAGNGIFARQALLALVLNAELAL</sequence>
<reference key="1">
    <citation type="journal article" date="2006" name="J. Bacteriol.">
        <title>Complete genome sequence of Yersinia pestis strains Antiqua and Nepal516: evidence of gene reduction in an emerging pathogen.</title>
        <authorList>
            <person name="Chain P.S.G."/>
            <person name="Hu P."/>
            <person name="Malfatti S.A."/>
            <person name="Radnedge L."/>
            <person name="Larimer F."/>
            <person name="Vergez L.M."/>
            <person name="Worsham P."/>
            <person name="Chu M.C."/>
            <person name="Andersen G.L."/>
        </authorList>
    </citation>
    <scope>NUCLEOTIDE SEQUENCE [LARGE SCALE GENOMIC DNA]</scope>
    <source>
        <strain>Nepal516</strain>
    </source>
</reference>
<reference key="2">
    <citation type="submission" date="2009-04" db="EMBL/GenBank/DDBJ databases">
        <title>Yersinia pestis Nepal516A whole genome shotgun sequencing project.</title>
        <authorList>
            <person name="Plunkett G. III"/>
            <person name="Anderson B.D."/>
            <person name="Baumler D.J."/>
            <person name="Burland V."/>
            <person name="Cabot E.L."/>
            <person name="Glasner J.D."/>
            <person name="Mau B."/>
            <person name="Neeno-Eckwall E."/>
            <person name="Perna N.T."/>
            <person name="Munk A.C."/>
            <person name="Tapia R."/>
            <person name="Green L.D."/>
            <person name="Rogers Y.C."/>
            <person name="Detter J.C."/>
            <person name="Bruce D.C."/>
            <person name="Brettin T.S."/>
        </authorList>
    </citation>
    <scope>NUCLEOTIDE SEQUENCE [LARGE SCALE GENOMIC DNA]</scope>
    <source>
        <strain>Nepal516</strain>
    </source>
</reference>
<name>PYRB_YERPN</name>
<dbReference type="EC" id="2.1.3.2" evidence="1"/>
<dbReference type="EMBL" id="CP000305">
    <property type="protein sequence ID" value="ABG19797.1"/>
    <property type="molecule type" value="Genomic_DNA"/>
</dbReference>
<dbReference type="EMBL" id="ACNQ01000019">
    <property type="protein sequence ID" value="EEO74347.1"/>
    <property type="molecule type" value="Genomic_DNA"/>
</dbReference>
<dbReference type="RefSeq" id="WP_002210111.1">
    <property type="nucleotide sequence ID" value="NZ_ACNQ01000019.1"/>
</dbReference>
<dbReference type="SMR" id="Q1CDY3"/>
<dbReference type="GeneID" id="57975128"/>
<dbReference type="KEGG" id="ypn:YPN_3470"/>
<dbReference type="HOGENOM" id="CLU_043846_1_2_6"/>
<dbReference type="UniPathway" id="UPA00070">
    <property type="reaction ID" value="UER00116"/>
</dbReference>
<dbReference type="Proteomes" id="UP000008936">
    <property type="component" value="Chromosome"/>
</dbReference>
<dbReference type="GO" id="GO:0005829">
    <property type="term" value="C:cytosol"/>
    <property type="evidence" value="ECO:0007669"/>
    <property type="project" value="TreeGrafter"/>
</dbReference>
<dbReference type="GO" id="GO:0016597">
    <property type="term" value="F:amino acid binding"/>
    <property type="evidence" value="ECO:0007669"/>
    <property type="project" value="InterPro"/>
</dbReference>
<dbReference type="GO" id="GO:0004070">
    <property type="term" value="F:aspartate carbamoyltransferase activity"/>
    <property type="evidence" value="ECO:0007669"/>
    <property type="project" value="UniProtKB-UniRule"/>
</dbReference>
<dbReference type="GO" id="GO:0006207">
    <property type="term" value="P:'de novo' pyrimidine nucleobase biosynthetic process"/>
    <property type="evidence" value="ECO:0007669"/>
    <property type="project" value="InterPro"/>
</dbReference>
<dbReference type="GO" id="GO:0044205">
    <property type="term" value="P:'de novo' UMP biosynthetic process"/>
    <property type="evidence" value="ECO:0007669"/>
    <property type="project" value="UniProtKB-UniRule"/>
</dbReference>
<dbReference type="GO" id="GO:0006520">
    <property type="term" value="P:amino acid metabolic process"/>
    <property type="evidence" value="ECO:0007669"/>
    <property type="project" value="InterPro"/>
</dbReference>
<dbReference type="FunFam" id="3.40.50.1370:FF:000001">
    <property type="entry name" value="Aspartate carbamoyltransferase"/>
    <property type="match status" value="1"/>
</dbReference>
<dbReference type="FunFam" id="3.40.50.1370:FF:000002">
    <property type="entry name" value="Aspartate carbamoyltransferase 2"/>
    <property type="match status" value="1"/>
</dbReference>
<dbReference type="Gene3D" id="3.40.50.1370">
    <property type="entry name" value="Aspartate/ornithine carbamoyltransferase"/>
    <property type="match status" value="2"/>
</dbReference>
<dbReference type="HAMAP" id="MF_00001">
    <property type="entry name" value="Asp_carb_tr"/>
    <property type="match status" value="1"/>
</dbReference>
<dbReference type="InterPro" id="IPR006132">
    <property type="entry name" value="Asp/Orn_carbamoyltranf_P-bd"/>
</dbReference>
<dbReference type="InterPro" id="IPR006130">
    <property type="entry name" value="Asp/Orn_carbamoylTrfase"/>
</dbReference>
<dbReference type="InterPro" id="IPR036901">
    <property type="entry name" value="Asp/Orn_carbamoylTrfase_sf"/>
</dbReference>
<dbReference type="InterPro" id="IPR002082">
    <property type="entry name" value="Asp_carbamoyltransf"/>
</dbReference>
<dbReference type="InterPro" id="IPR006131">
    <property type="entry name" value="Asp_carbamoyltransf_Asp/Orn-bd"/>
</dbReference>
<dbReference type="NCBIfam" id="TIGR00670">
    <property type="entry name" value="asp_carb_tr"/>
    <property type="match status" value="1"/>
</dbReference>
<dbReference type="NCBIfam" id="NF002032">
    <property type="entry name" value="PRK00856.1"/>
    <property type="match status" value="1"/>
</dbReference>
<dbReference type="PANTHER" id="PTHR45753:SF6">
    <property type="entry name" value="ASPARTATE CARBAMOYLTRANSFERASE"/>
    <property type="match status" value="1"/>
</dbReference>
<dbReference type="PANTHER" id="PTHR45753">
    <property type="entry name" value="ORNITHINE CARBAMOYLTRANSFERASE, MITOCHONDRIAL"/>
    <property type="match status" value="1"/>
</dbReference>
<dbReference type="Pfam" id="PF00185">
    <property type="entry name" value="OTCace"/>
    <property type="match status" value="1"/>
</dbReference>
<dbReference type="Pfam" id="PF02729">
    <property type="entry name" value="OTCace_N"/>
    <property type="match status" value="1"/>
</dbReference>
<dbReference type="PRINTS" id="PR00100">
    <property type="entry name" value="AOTCASE"/>
</dbReference>
<dbReference type="PRINTS" id="PR00101">
    <property type="entry name" value="ATCASE"/>
</dbReference>
<dbReference type="SUPFAM" id="SSF53671">
    <property type="entry name" value="Aspartate/ornithine carbamoyltransferase"/>
    <property type="match status" value="1"/>
</dbReference>
<dbReference type="PROSITE" id="PS00097">
    <property type="entry name" value="CARBAMOYLTRANSFERASE"/>
    <property type="match status" value="1"/>
</dbReference>
<comment type="function">
    <text evidence="1">Catalyzes the condensation of carbamoyl phosphate and aspartate to form carbamoyl aspartate and inorganic phosphate, the committed step in the de novo pyrimidine nucleotide biosynthesis pathway.</text>
</comment>
<comment type="catalytic activity">
    <reaction evidence="1">
        <text>carbamoyl phosphate + L-aspartate = N-carbamoyl-L-aspartate + phosphate + H(+)</text>
        <dbReference type="Rhea" id="RHEA:20013"/>
        <dbReference type="ChEBI" id="CHEBI:15378"/>
        <dbReference type="ChEBI" id="CHEBI:29991"/>
        <dbReference type="ChEBI" id="CHEBI:32814"/>
        <dbReference type="ChEBI" id="CHEBI:43474"/>
        <dbReference type="ChEBI" id="CHEBI:58228"/>
        <dbReference type="EC" id="2.1.3.2"/>
    </reaction>
</comment>
<comment type="pathway">
    <text evidence="1">Pyrimidine metabolism; UMP biosynthesis via de novo pathway; (S)-dihydroorotate from bicarbonate: step 2/3.</text>
</comment>
<comment type="subunit">
    <text evidence="1">Heterododecamer (2C3:3R2) of six catalytic PyrB chains organized as two trimers (C3), and six regulatory PyrI chains organized as three dimers (R2).</text>
</comment>
<comment type="similarity">
    <text evidence="1">Belongs to the aspartate/ornithine carbamoyltransferase superfamily. ATCase family.</text>
</comment>
<protein>
    <recommendedName>
        <fullName evidence="1">Aspartate carbamoyltransferase catalytic subunit</fullName>
        <ecNumber evidence="1">2.1.3.2</ecNumber>
    </recommendedName>
    <alternativeName>
        <fullName evidence="1">Aspartate transcarbamylase</fullName>
        <shortName evidence="1">ATCase</shortName>
    </alternativeName>
</protein>
<keyword id="KW-0665">Pyrimidine biosynthesis</keyword>
<keyword id="KW-0808">Transferase</keyword>
<evidence type="ECO:0000255" key="1">
    <source>
        <dbReference type="HAMAP-Rule" id="MF_00001"/>
    </source>
</evidence>
<feature type="chain" id="PRO_0000301643" description="Aspartate carbamoyltransferase catalytic subunit">
    <location>
        <begin position="1"/>
        <end position="311"/>
    </location>
</feature>
<feature type="binding site" evidence="1">
    <location>
        <position position="55"/>
    </location>
    <ligand>
        <name>carbamoyl phosphate</name>
        <dbReference type="ChEBI" id="CHEBI:58228"/>
    </ligand>
</feature>
<feature type="binding site" evidence="1">
    <location>
        <position position="56"/>
    </location>
    <ligand>
        <name>carbamoyl phosphate</name>
        <dbReference type="ChEBI" id="CHEBI:58228"/>
    </ligand>
</feature>
<feature type="binding site" evidence="1">
    <location>
        <position position="85"/>
    </location>
    <ligand>
        <name>L-aspartate</name>
        <dbReference type="ChEBI" id="CHEBI:29991"/>
    </ligand>
</feature>
<feature type="binding site" evidence="1">
    <location>
        <position position="106"/>
    </location>
    <ligand>
        <name>carbamoyl phosphate</name>
        <dbReference type="ChEBI" id="CHEBI:58228"/>
    </ligand>
</feature>
<feature type="binding site" evidence="1">
    <location>
        <position position="135"/>
    </location>
    <ligand>
        <name>carbamoyl phosphate</name>
        <dbReference type="ChEBI" id="CHEBI:58228"/>
    </ligand>
</feature>
<feature type="binding site" evidence="1">
    <location>
        <position position="138"/>
    </location>
    <ligand>
        <name>carbamoyl phosphate</name>
        <dbReference type="ChEBI" id="CHEBI:58228"/>
    </ligand>
</feature>
<feature type="binding site" evidence="1">
    <location>
        <position position="168"/>
    </location>
    <ligand>
        <name>L-aspartate</name>
        <dbReference type="ChEBI" id="CHEBI:29991"/>
    </ligand>
</feature>
<feature type="binding site" evidence="1">
    <location>
        <position position="230"/>
    </location>
    <ligand>
        <name>L-aspartate</name>
        <dbReference type="ChEBI" id="CHEBI:29991"/>
    </ligand>
</feature>
<feature type="binding site" evidence="1">
    <location>
        <position position="268"/>
    </location>
    <ligand>
        <name>carbamoyl phosphate</name>
        <dbReference type="ChEBI" id="CHEBI:58228"/>
    </ligand>
</feature>
<feature type="binding site" evidence="1">
    <location>
        <position position="269"/>
    </location>
    <ligand>
        <name>carbamoyl phosphate</name>
        <dbReference type="ChEBI" id="CHEBI:58228"/>
    </ligand>
</feature>
<gene>
    <name evidence="1" type="primary">pyrB</name>
    <name type="ordered locus">YPN_3470</name>
    <name type="ORF">YP516_3943</name>
</gene>
<accession>Q1CDY3</accession>
<accession>D1Q1E4</accession>
<proteinExistence type="inferred from homology"/>